<organism>
    <name type="scientific">Lepus sinensis</name>
    <name type="common">Chinese hare</name>
    <dbReference type="NCBI Taxonomy" id="112022"/>
    <lineage>
        <taxon>Eukaryota</taxon>
        <taxon>Metazoa</taxon>
        <taxon>Chordata</taxon>
        <taxon>Craniata</taxon>
        <taxon>Vertebrata</taxon>
        <taxon>Euteleostomi</taxon>
        <taxon>Mammalia</taxon>
        <taxon>Eutheria</taxon>
        <taxon>Euarchontoglires</taxon>
        <taxon>Glires</taxon>
        <taxon>Lagomorpha</taxon>
        <taxon>Leporidae</taxon>
        <taxon>Lepus</taxon>
    </lineage>
</organism>
<protein>
    <recommendedName>
        <fullName>Cytochrome b</fullName>
    </recommendedName>
    <alternativeName>
        <fullName>Complex III subunit 3</fullName>
    </alternativeName>
    <alternativeName>
        <fullName>Complex III subunit III</fullName>
    </alternativeName>
    <alternativeName>
        <fullName>Cytochrome b-c1 complex subunit 3</fullName>
    </alternativeName>
    <alternativeName>
        <fullName>Ubiquinol-cytochrome-c reductase complex cytochrome b subunit</fullName>
    </alternativeName>
</protein>
<geneLocation type="mitochondrion"/>
<sequence length="379" mass="42974">MTNIRKTHPLLKIVNHSLIDLPTPSNISTWWNFGSLLGLCLMIQILTGLFLAMHYTSDTATAFSSVTHICRDVNYGWLIRYLHANGASMFFICLYMHVGRGIYYGSYTYLETWNIGIILLFAVMATAFMGYVLPWGQMSFWGATVITNLLSAIPYIGTTLVEWIWGGFSVDKATLTRFFAFHFILPFIIAALVMIHLLFLHETGSNNPSGIPWDSDKIPFHPYYTIKDALGFLMLILMLMLLVLFSPDLLGDPDNYTPANPLNTPPHIKPEWYFLFAYAILRSIPNKLGGVLALVMSILILAIIPFLHMSKQRSMMFRPISQVLFWILVADLLTLTWIGGQPVEHPFITIGQVASILYFSIILILMPLVSLVENKILKW</sequence>
<reference key="1">
    <citation type="submission" date="2000-01" db="EMBL/GenBank/DDBJ databases">
        <title>Molecular phylogeny of Chinese hare (Lepus) inferred from mitochondrial cytochrome b and control region sequences.</title>
        <authorList>
            <person name="Wu C."/>
            <person name="Zhang Y."/>
        </authorList>
    </citation>
    <scope>NUCLEOTIDE SEQUENCE [GENOMIC DNA]</scope>
</reference>
<proteinExistence type="inferred from homology"/>
<evidence type="ECO:0000250" key="1"/>
<evidence type="ECO:0000250" key="2">
    <source>
        <dbReference type="UniProtKB" id="P00157"/>
    </source>
</evidence>
<evidence type="ECO:0000255" key="3">
    <source>
        <dbReference type="PROSITE-ProRule" id="PRU00967"/>
    </source>
</evidence>
<evidence type="ECO:0000255" key="4">
    <source>
        <dbReference type="PROSITE-ProRule" id="PRU00968"/>
    </source>
</evidence>
<dbReference type="EMBL" id="AJ279419">
    <property type="protein sequence ID" value="CAB65747.1"/>
    <property type="molecule type" value="Genomic_DNA"/>
</dbReference>
<dbReference type="SMR" id="Q9T6I4"/>
<dbReference type="GO" id="GO:0005743">
    <property type="term" value="C:mitochondrial inner membrane"/>
    <property type="evidence" value="ECO:0007669"/>
    <property type="project" value="UniProtKB-SubCell"/>
</dbReference>
<dbReference type="GO" id="GO:0045275">
    <property type="term" value="C:respiratory chain complex III"/>
    <property type="evidence" value="ECO:0007669"/>
    <property type="project" value="InterPro"/>
</dbReference>
<dbReference type="GO" id="GO:0046872">
    <property type="term" value="F:metal ion binding"/>
    <property type="evidence" value="ECO:0007669"/>
    <property type="project" value="UniProtKB-KW"/>
</dbReference>
<dbReference type="GO" id="GO:0008121">
    <property type="term" value="F:ubiquinol-cytochrome-c reductase activity"/>
    <property type="evidence" value="ECO:0007669"/>
    <property type="project" value="InterPro"/>
</dbReference>
<dbReference type="GO" id="GO:0006122">
    <property type="term" value="P:mitochondrial electron transport, ubiquinol to cytochrome c"/>
    <property type="evidence" value="ECO:0007669"/>
    <property type="project" value="TreeGrafter"/>
</dbReference>
<dbReference type="CDD" id="cd00290">
    <property type="entry name" value="cytochrome_b_C"/>
    <property type="match status" value="1"/>
</dbReference>
<dbReference type="CDD" id="cd00284">
    <property type="entry name" value="Cytochrome_b_N"/>
    <property type="match status" value="1"/>
</dbReference>
<dbReference type="FunFam" id="1.20.810.10:FF:000002">
    <property type="entry name" value="Cytochrome b"/>
    <property type="match status" value="1"/>
</dbReference>
<dbReference type="Gene3D" id="1.20.810.10">
    <property type="entry name" value="Cytochrome Bc1 Complex, Chain C"/>
    <property type="match status" value="1"/>
</dbReference>
<dbReference type="InterPro" id="IPR005798">
    <property type="entry name" value="Cyt_b/b6_C"/>
</dbReference>
<dbReference type="InterPro" id="IPR036150">
    <property type="entry name" value="Cyt_b/b6_C_sf"/>
</dbReference>
<dbReference type="InterPro" id="IPR005797">
    <property type="entry name" value="Cyt_b/b6_N"/>
</dbReference>
<dbReference type="InterPro" id="IPR027387">
    <property type="entry name" value="Cytb/b6-like_sf"/>
</dbReference>
<dbReference type="InterPro" id="IPR030689">
    <property type="entry name" value="Cytochrome_b"/>
</dbReference>
<dbReference type="InterPro" id="IPR048260">
    <property type="entry name" value="Cytochrome_b_C_euk/bac"/>
</dbReference>
<dbReference type="InterPro" id="IPR048259">
    <property type="entry name" value="Cytochrome_b_N_euk/bac"/>
</dbReference>
<dbReference type="InterPro" id="IPR016174">
    <property type="entry name" value="Di-haem_cyt_TM"/>
</dbReference>
<dbReference type="PANTHER" id="PTHR19271">
    <property type="entry name" value="CYTOCHROME B"/>
    <property type="match status" value="1"/>
</dbReference>
<dbReference type="PANTHER" id="PTHR19271:SF16">
    <property type="entry name" value="CYTOCHROME B"/>
    <property type="match status" value="1"/>
</dbReference>
<dbReference type="Pfam" id="PF00032">
    <property type="entry name" value="Cytochrom_B_C"/>
    <property type="match status" value="1"/>
</dbReference>
<dbReference type="Pfam" id="PF00033">
    <property type="entry name" value="Cytochrome_B"/>
    <property type="match status" value="1"/>
</dbReference>
<dbReference type="PIRSF" id="PIRSF038885">
    <property type="entry name" value="COB"/>
    <property type="match status" value="1"/>
</dbReference>
<dbReference type="SUPFAM" id="SSF81648">
    <property type="entry name" value="a domain/subunit of cytochrome bc1 complex (Ubiquinol-cytochrome c reductase)"/>
    <property type="match status" value="1"/>
</dbReference>
<dbReference type="SUPFAM" id="SSF81342">
    <property type="entry name" value="Transmembrane di-heme cytochromes"/>
    <property type="match status" value="1"/>
</dbReference>
<dbReference type="PROSITE" id="PS51003">
    <property type="entry name" value="CYTB_CTER"/>
    <property type="match status" value="1"/>
</dbReference>
<dbReference type="PROSITE" id="PS51002">
    <property type="entry name" value="CYTB_NTER"/>
    <property type="match status" value="1"/>
</dbReference>
<comment type="function">
    <text evidence="2">Component of the ubiquinol-cytochrome c reductase complex (complex III or cytochrome b-c1 complex) that is part of the mitochondrial respiratory chain. The b-c1 complex mediates electron transfer from ubiquinol to cytochrome c. Contributes to the generation of a proton gradient across the mitochondrial membrane that is then used for ATP synthesis.</text>
</comment>
<comment type="cofactor">
    <cofactor evidence="2">
        <name>heme b</name>
        <dbReference type="ChEBI" id="CHEBI:60344"/>
    </cofactor>
    <text evidence="2">Binds 2 heme b groups non-covalently.</text>
</comment>
<comment type="subunit">
    <text evidence="2">The cytochrome bc1 complex contains 11 subunits: 3 respiratory subunits (MT-CYB, CYC1 and UQCRFS1), 2 core proteins (UQCRC1 and UQCRC2) and 6 low-molecular weight proteins (UQCRH/QCR6, UQCRB/QCR7, UQCRQ/QCR8, UQCR10/QCR9, UQCR11/QCR10 and a cleavage product of UQCRFS1). This cytochrome bc1 complex then forms a dimer.</text>
</comment>
<comment type="subcellular location">
    <subcellularLocation>
        <location evidence="2">Mitochondrion inner membrane</location>
        <topology evidence="2">Multi-pass membrane protein</topology>
    </subcellularLocation>
</comment>
<comment type="miscellaneous">
    <text evidence="1">Heme 1 (or BL or b562) is low-potential and absorbs at about 562 nm, and heme 2 (or BH or b566) is high-potential and absorbs at about 566 nm.</text>
</comment>
<comment type="similarity">
    <text evidence="3 4">Belongs to the cytochrome b family.</text>
</comment>
<comment type="caution">
    <text evidence="2">The full-length protein contains only eight transmembrane helices, not nine as predicted by bioinformatics tools.</text>
</comment>
<keyword id="KW-0249">Electron transport</keyword>
<keyword id="KW-0349">Heme</keyword>
<keyword id="KW-0408">Iron</keyword>
<keyword id="KW-0472">Membrane</keyword>
<keyword id="KW-0479">Metal-binding</keyword>
<keyword id="KW-0496">Mitochondrion</keyword>
<keyword id="KW-0999">Mitochondrion inner membrane</keyword>
<keyword id="KW-0679">Respiratory chain</keyword>
<keyword id="KW-0812">Transmembrane</keyword>
<keyword id="KW-1133">Transmembrane helix</keyword>
<keyword id="KW-0813">Transport</keyword>
<keyword id="KW-0830">Ubiquinone</keyword>
<feature type="chain" id="PRO_0000061110" description="Cytochrome b">
    <location>
        <begin position="1"/>
        <end position="379"/>
    </location>
</feature>
<feature type="transmembrane region" description="Helical" evidence="2">
    <location>
        <begin position="33"/>
        <end position="53"/>
    </location>
</feature>
<feature type="transmembrane region" description="Helical" evidence="2">
    <location>
        <begin position="77"/>
        <end position="98"/>
    </location>
</feature>
<feature type="transmembrane region" description="Helical" evidence="2">
    <location>
        <begin position="113"/>
        <end position="133"/>
    </location>
</feature>
<feature type="transmembrane region" description="Helical" evidence="2">
    <location>
        <begin position="178"/>
        <end position="198"/>
    </location>
</feature>
<feature type="transmembrane region" description="Helical" evidence="2">
    <location>
        <begin position="226"/>
        <end position="246"/>
    </location>
</feature>
<feature type="transmembrane region" description="Helical" evidence="2">
    <location>
        <begin position="288"/>
        <end position="308"/>
    </location>
</feature>
<feature type="transmembrane region" description="Helical" evidence="2">
    <location>
        <begin position="320"/>
        <end position="340"/>
    </location>
</feature>
<feature type="transmembrane region" description="Helical" evidence="2">
    <location>
        <begin position="347"/>
        <end position="367"/>
    </location>
</feature>
<feature type="binding site" description="axial binding residue" evidence="2">
    <location>
        <position position="83"/>
    </location>
    <ligand>
        <name>heme b</name>
        <dbReference type="ChEBI" id="CHEBI:60344"/>
        <label>b562</label>
    </ligand>
    <ligandPart>
        <name>Fe</name>
        <dbReference type="ChEBI" id="CHEBI:18248"/>
    </ligandPart>
</feature>
<feature type="binding site" description="axial binding residue" evidence="2">
    <location>
        <position position="97"/>
    </location>
    <ligand>
        <name>heme b</name>
        <dbReference type="ChEBI" id="CHEBI:60344"/>
        <label>b566</label>
    </ligand>
    <ligandPart>
        <name>Fe</name>
        <dbReference type="ChEBI" id="CHEBI:18248"/>
    </ligandPart>
</feature>
<feature type="binding site" description="axial binding residue" evidence="2">
    <location>
        <position position="182"/>
    </location>
    <ligand>
        <name>heme b</name>
        <dbReference type="ChEBI" id="CHEBI:60344"/>
        <label>b562</label>
    </ligand>
    <ligandPart>
        <name>Fe</name>
        <dbReference type="ChEBI" id="CHEBI:18248"/>
    </ligandPart>
</feature>
<feature type="binding site" description="axial binding residue" evidence="2">
    <location>
        <position position="196"/>
    </location>
    <ligand>
        <name>heme b</name>
        <dbReference type="ChEBI" id="CHEBI:60344"/>
        <label>b566</label>
    </ligand>
    <ligandPart>
        <name>Fe</name>
        <dbReference type="ChEBI" id="CHEBI:18248"/>
    </ligandPart>
</feature>
<feature type="binding site" evidence="2">
    <location>
        <position position="201"/>
    </location>
    <ligand>
        <name>a ubiquinone</name>
        <dbReference type="ChEBI" id="CHEBI:16389"/>
    </ligand>
</feature>
<name>CYB_LEPSI</name>
<accession>Q9T6I4</accession>
<gene>
    <name type="primary">MT-CYB</name>
    <name type="synonym">COB</name>
    <name type="synonym">CYTB</name>
    <name type="synonym">MTCYB</name>
</gene>